<evidence type="ECO:0000250" key="1"/>
<evidence type="ECO:0000255" key="2"/>
<evidence type="ECO:0000305" key="3"/>
<proteinExistence type="evidence at transcript level"/>
<protein>
    <recommendedName>
        <fullName>U1-lycotoxin-Ls1b</fullName>
    </recommendedName>
    <alternativeName>
        <fullName>Toxin-like structure LSTX-A8</fullName>
    </alternativeName>
</protein>
<accession>B6DCJ7</accession>
<feature type="signal peptide" evidence="2">
    <location>
        <begin position="1"/>
        <end position="20"/>
    </location>
</feature>
<feature type="propeptide" id="PRO_0000401515" evidence="1">
    <location>
        <begin position="21"/>
        <end position="41"/>
    </location>
</feature>
<feature type="chain" id="PRO_0000401516" description="U1-lycotoxin-Ls1b">
    <location>
        <begin position="42"/>
        <end position="107"/>
    </location>
</feature>
<feature type="disulfide bond" evidence="1">
    <location>
        <begin position="44"/>
        <end position="59"/>
    </location>
</feature>
<feature type="disulfide bond" evidence="1">
    <location>
        <begin position="51"/>
        <end position="68"/>
    </location>
</feature>
<feature type="disulfide bond" evidence="1">
    <location>
        <begin position="58"/>
        <end position="86"/>
    </location>
</feature>
<feature type="disulfide bond" evidence="1">
    <location>
        <begin position="70"/>
        <end position="84"/>
    </location>
</feature>
<sequence length="107" mass="11906">MMKVLVVVALLVTHISYSSSEGIDDLEADELLSLMANEQTRKECIPKHHECTSNKHGCCRGNFFKYKCQCTTVVTQDGEQTERCFCGTPPHHKAAELVVGFGKKIFG</sequence>
<dbReference type="EMBL" id="EU925931">
    <property type="protein sequence ID" value="ACI41263.1"/>
    <property type="molecule type" value="mRNA"/>
</dbReference>
<dbReference type="EMBL" id="FM863935">
    <property type="protein sequence ID" value="CAS03534.1"/>
    <property type="molecule type" value="mRNA"/>
</dbReference>
<dbReference type="SMR" id="B6DCJ7"/>
<dbReference type="ArachnoServer" id="AS000884">
    <property type="toxin name" value="U1-lycotoxin-Ls1b"/>
</dbReference>
<dbReference type="GO" id="GO:0005576">
    <property type="term" value="C:extracellular region"/>
    <property type="evidence" value="ECO:0007669"/>
    <property type="project" value="UniProtKB-SubCell"/>
</dbReference>
<dbReference type="GO" id="GO:0090729">
    <property type="term" value="F:toxin activity"/>
    <property type="evidence" value="ECO:0007669"/>
    <property type="project" value="UniProtKB-KW"/>
</dbReference>
<dbReference type="InterPro" id="IPR019553">
    <property type="entry name" value="Spider_toxin_CSTX_knottin"/>
</dbReference>
<dbReference type="InterPro" id="IPR011142">
    <property type="entry name" value="Spider_toxin_CSTX_Knottin_CS"/>
</dbReference>
<dbReference type="Pfam" id="PF10530">
    <property type="entry name" value="Toxin_35"/>
    <property type="match status" value="1"/>
</dbReference>
<dbReference type="PROSITE" id="PS60029">
    <property type="entry name" value="SPIDER_CSTX"/>
    <property type="match status" value="1"/>
</dbReference>
<comment type="subcellular location">
    <subcellularLocation>
        <location evidence="1">Secreted</location>
    </subcellularLocation>
</comment>
<comment type="tissue specificity">
    <text>Expressed by the venom gland.</text>
</comment>
<comment type="domain">
    <text evidence="1">The presence of a 'disulfide through disulfide knot' structurally defines this protein as a knottin.</text>
</comment>
<comment type="similarity">
    <text evidence="3">Belongs to the neurotoxin 19 (CSTX) family. 04 (U1-Lctx) subfamily.</text>
</comment>
<reference key="1">
    <citation type="journal article" date="2010" name="Zoology">
        <title>Transcriptome analysis of the venom glands of the Chinese wolf spider Lycosa singoriensis.</title>
        <authorList>
            <person name="Zhang Y."/>
            <person name="Chen J."/>
            <person name="Tang X."/>
            <person name="Wang F."/>
            <person name="Jiang L."/>
            <person name="Xiong X."/>
            <person name="Wang M."/>
            <person name="Rong M."/>
            <person name="Liu Z."/>
            <person name="Liang S."/>
        </authorList>
    </citation>
    <scope>NUCLEOTIDE SEQUENCE [LARGE SCALE MRNA]</scope>
    <source>
        <tissue>Venom gland</tissue>
    </source>
</reference>
<name>TX108_LYCSI</name>
<keyword id="KW-1015">Disulfide bond</keyword>
<keyword id="KW-0960">Knottin</keyword>
<keyword id="KW-0964">Secreted</keyword>
<keyword id="KW-0732">Signal</keyword>
<keyword id="KW-0800">Toxin</keyword>
<organism>
    <name type="scientific">Lycosa singoriensis</name>
    <name type="common">Wolf spider</name>
    <name type="synonym">Aranea singoriensis</name>
    <dbReference type="NCBI Taxonomy" id="434756"/>
    <lineage>
        <taxon>Eukaryota</taxon>
        <taxon>Metazoa</taxon>
        <taxon>Ecdysozoa</taxon>
        <taxon>Arthropoda</taxon>
        <taxon>Chelicerata</taxon>
        <taxon>Arachnida</taxon>
        <taxon>Araneae</taxon>
        <taxon>Araneomorphae</taxon>
        <taxon>Entelegynae</taxon>
        <taxon>Lycosoidea</taxon>
        <taxon>Lycosidae</taxon>
        <taxon>Lycosa</taxon>
    </lineage>
</organism>